<reference key="1">
    <citation type="submission" date="2006-02" db="EMBL/GenBank/DDBJ databases">
        <title>Complete sequence of chromosome of Jannaschia sp. CCS1.</title>
        <authorList>
            <consortium name="US DOE Joint Genome Institute"/>
            <person name="Copeland A."/>
            <person name="Lucas S."/>
            <person name="Lapidus A."/>
            <person name="Barry K."/>
            <person name="Detter J.C."/>
            <person name="Glavina del Rio T."/>
            <person name="Hammon N."/>
            <person name="Israni S."/>
            <person name="Pitluck S."/>
            <person name="Brettin T."/>
            <person name="Bruce D."/>
            <person name="Han C."/>
            <person name="Tapia R."/>
            <person name="Gilna P."/>
            <person name="Chertkov O."/>
            <person name="Saunders E."/>
            <person name="Schmutz J."/>
            <person name="Larimer F."/>
            <person name="Land M."/>
            <person name="Kyrpides N."/>
            <person name="Lykidis A."/>
            <person name="Moran M.A."/>
            <person name="Belas R."/>
            <person name="Ye W."/>
            <person name="Buchan A."/>
            <person name="Gonzalez J.M."/>
            <person name="Schell M.A."/>
            <person name="Richardson P."/>
        </authorList>
    </citation>
    <scope>NUCLEOTIDE SEQUENCE [LARGE SCALE GENOMIC DNA]</scope>
    <source>
        <strain>CCS1</strain>
    </source>
</reference>
<evidence type="ECO:0000255" key="1">
    <source>
        <dbReference type="HAMAP-Rule" id="MF_01708"/>
    </source>
</evidence>
<name>LOLD_JANSC</name>
<accession>Q28M30</accession>
<dbReference type="EC" id="7.6.2.-" evidence="1"/>
<dbReference type="EMBL" id="CP000264">
    <property type="protein sequence ID" value="ABD56232.1"/>
    <property type="molecule type" value="Genomic_DNA"/>
</dbReference>
<dbReference type="RefSeq" id="WP_011456434.1">
    <property type="nucleotide sequence ID" value="NC_007802.1"/>
</dbReference>
<dbReference type="SMR" id="Q28M30"/>
<dbReference type="STRING" id="290400.Jann_3315"/>
<dbReference type="KEGG" id="jan:Jann_3315"/>
<dbReference type="eggNOG" id="COG1136">
    <property type="taxonomic scope" value="Bacteria"/>
</dbReference>
<dbReference type="HOGENOM" id="CLU_000604_1_22_5"/>
<dbReference type="OrthoDB" id="9802264at2"/>
<dbReference type="Proteomes" id="UP000008326">
    <property type="component" value="Chromosome"/>
</dbReference>
<dbReference type="GO" id="GO:0005886">
    <property type="term" value="C:plasma membrane"/>
    <property type="evidence" value="ECO:0007669"/>
    <property type="project" value="UniProtKB-SubCell"/>
</dbReference>
<dbReference type="GO" id="GO:0005524">
    <property type="term" value="F:ATP binding"/>
    <property type="evidence" value="ECO:0007669"/>
    <property type="project" value="UniProtKB-KW"/>
</dbReference>
<dbReference type="GO" id="GO:0016887">
    <property type="term" value="F:ATP hydrolysis activity"/>
    <property type="evidence" value="ECO:0007669"/>
    <property type="project" value="InterPro"/>
</dbReference>
<dbReference type="GO" id="GO:0022857">
    <property type="term" value="F:transmembrane transporter activity"/>
    <property type="evidence" value="ECO:0007669"/>
    <property type="project" value="TreeGrafter"/>
</dbReference>
<dbReference type="GO" id="GO:0044874">
    <property type="term" value="P:lipoprotein localization to outer membrane"/>
    <property type="evidence" value="ECO:0007669"/>
    <property type="project" value="TreeGrafter"/>
</dbReference>
<dbReference type="GO" id="GO:0089705">
    <property type="term" value="P:protein localization to outer membrane"/>
    <property type="evidence" value="ECO:0007669"/>
    <property type="project" value="TreeGrafter"/>
</dbReference>
<dbReference type="CDD" id="cd03255">
    <property type="entry name" value="ABC_MJ0796_LolCDE_FtsE"/>
    <property type="match status" value="1"/>
</dbReference>
<dbReference type="Gene3D" id="3.40.50.300">
    <property type="entry name" value="P-loop containing nucleotide triphosphate hydrolases"/>
    <property type="match status" value="1"/>
</dbReference>
<dbReference type="InterPro" id="IPR003593">
    <property type="entry name" value="AAA+_ATPase"/>
</dbReference>
<dbReference type="InterPro" id="IPR003439">
    <property type="entry name" value="ABC_transporter-like_ATP-bd"/>
</dbReference>
<dbReference type="InterPro" id="IPR017871">
    <property type="entry name" value="ABC_transporter-like_CS"/>
</dbReference>
<dbReference type="InterPro" id="IPR015854">
    <property type="entry name" value="ABC_transpr_LolD-like"/>
</dbReference>
<dbReference type="InterPro" id="IPR017911">
    <property type="entry name" value="MacB-like_ATP-bd"/>
</dbReference>
<dbReference type="InterPro" id="IPR027417">
    <property type="entry name" value="P-loop_NTPase"/>
</dbReference>
<dbReference type="PANTHER" id="PTHR24220">
    <property type="entry name" value="IMPORT ATP-BINDING PROTEIN"/>
    <property type="match status" value="1"/>
</dbReference>
<dbReference type="PANTHER" id="PTHR24220:SF689">
    <property type="entry name" value="LIPOPROTEIN-RELEASING SYSTEM ATP-BINDING PROTEIN LOLD"/>
    <property type="match status" value="1"/>
</dbReference>
<dbReference type="Pfam" id="PF00005">
    <property type="entry name" value="ABC_tran"/>
    <property type="match status" value="1"/>
</dbReference>
<dbReference type="SMART" id="SM00382">
    <property type="entry name" value="AAA"/>
    <property type="match status" value="1"/>
</dbReference>
<dbReference type="SUPFAM" id="SSF52540">
    <property type="entry name" value="P-loop containing nucleoside triphosphate hydrolases"/>
    <property type="match status" value="1"/>
</dbReference>
<dbReference type="PROSITE" id="PS00211">
    <property type="entry name" value="ABC_TRANSPORTER_1"/>
    <property type="match status" value="1"/>
</dbReference>
<dbReference type="PROSITE" id="PS50893">
    <property type="entry name" value="ABC_TRANSPORTER_2"/>
    <property type="match status" value="1"/>
</dbReference>
<dbReference type="PROSITE" id="PS51244">
    <property type="entry name" value="LOLD"/>
    <property type="match status" value="1"/>
</dbReference>
<keyword id="KW-0067">ATP-binding</keyword>
<keyword id="KW-0997">Cell inner membrane</keyword>
<keyword id="KW-1003">Cell membrane</keyword>
<keyword id="KW-0472">Membrane</keyword>
<keyword id="KW-0547">Nucleotide-binding</keyword>
<keyword id="KW-1185">Reference proteome</keyword>
<keyword id="KW-1278">Translocase</keyword>
<keyword id="KW-0813">Transport</keyword>
<comment type="function">
    <text evidence="1">Part of the ABC transporter complex LolCDE involved in the translocation of mature outer membrane-directed lipoproteins, from the inner membrane to the periplasmic chaperone, LolA. Responsible for the formation of the LolA-lipoprotein complex in an ATP-dependent manner.</text>
</comment>
<comment type="subunit">
    <text evidence="1">The complex is composed of two ATP-binding proteins (LolD) and two transmembrane proteins (LolC and LolE).</text>
</comment>
<comment type="subcellular location">
    <subcellularLocation>
        <location evidence="1">Cell inner membrane</location>
        <topology evidence="1">Peripheral membrane protein</topology>
    </subcellularLocation>
</comment>
<comment type="similarity">
    <text evidence="1">Belongs to the ABC transporter superfamily. Lipoprotein translocase (TC 3.A.1.125) family.</text>
</comment>
<sequence length="227" mass="23893">MSEFSLVLDDIQKSYNHGKANEINVLRGASTRIARGEIVGLIAPSGAGKSTLLQIAGLLDTADAGRVEIGGELVTGATDRARTAARRGKVGFVYQFHHLLPEFSAVENIVLPQLAHGVAAGEAEARALDLLGRVGMAARATHRPGELSGGEQQRVAFCRSLANAPALMLADEPTGNLDPATSDTVFDVLMELVRGTGLSALIATHNHELAARMDRVLRLDEGVLVSA</sequence>
<proteinExistence type="inferred from homology"/>
<protein>
    <recommendedName>
        <fullName evidence="1">Lipoprotein-releasing system ATP-binding protein LolD</fullName>
        <ecNumber evidence="1">7.6.2.-</ecNumber>
    </recommendedName>
</protein>
<gene>
    <name evidence="1" type="primary">lolD</name>
    <name type="ordered locus">Jann_3315</name>
</gene>
<feature type="chain" id="PRO_0000272098" description="Lipoprotein-releasing system ATP-binding protein LolD">
    <location>
        <begin position="1"/>
        <end position="227"/>
    </location>
</feature>
<feature type="domain" description="ABC transporter" evidence="1">
    <location>
        <begin position="6"/>
        <end position="227"/>
    </location>
</feature>
<feature type="binding site" evidence="1">
    <location>
        <begin position="43"/>
        <end position="50"/>
    </location>
    <ligand>
        <name>ATP</name>
        <dbReference type="ChEBI" id="CHEBI:30616"/>
    </ligand>
</feature>
<organism>
    <name type="scientific">Jannaschia sp. (strain CCS1)</name>
    <dbReference type="NCBI Taxonomy" id="290400"/>
    <lineage>
        <taxon>Bacteria</taxon>
        <taxon>Pseudomonadati</taxon>
        <taxon>Pseudomonadota</taxon>
        <taxon>Alphaproteobacteria</taxon>
        <taxon>Rhodobacterales</taxon>
        <taxon>Roseobacteraceae</taxon>
        <taxon>Jannaschia</taxon>
    </lineage>
</organism>